<sequence length="389" mass="45056">MSLLGARSTYRWFSIAASIPTKNAIGKSTYLLASRNQQYRGIITSTVDWKPIKTGKSPNDDSRRERSFGKKIVLGLMFAMPIISFYLGTWQVRRLKWKTKLIAACETKLTYEPIPLPKSFTPDMCEDWEYRKVILTGHFLHNEEMFVGPRKKNGEKGYFLFTPFIRDDTGEKVLIERGWISEEKVAPDSRNLHHLSLPQEEHLKVVCLVRPPKKRGSLQWAKKDPNSRLWQVPDIYDMARSSGCTPIQFQALYDMKDHPIIEEHTRNEASQNNSTSSLWKFWKREPTTAVNGTQAVDNNTSKPRSRQEMPTDQTIEFDERQFIKAGVPIGRKPTIDLKNNHLQYLVTWYGLSFLSTIFLIVALRKAKRGGVVSQDQLMKEKLKHSRKYM</sequence>
<organism>
    <name type="scientific">Saccharomyces cerevisiae (strain ATCC 204508 / S288c)</name>
    <name type="common">Baker's yeast</name>
    <dbReference type="NCBI Taxonomy" id="559292"/>
    <lineage>
        <taxon>Eukaryota</taxon>
        <taxon>Fungi</taxon>
        <taxon>Dikarya</taxon>
        <taxon>Ascomycota</taxon>
        <taxon>Saccharomycotina</taxon>
        <taxon>Saccharomycetes</taxon>
        <taxon>Saccharomycetales</taxon>
        <taxon>Saccharomycetaceae</taxon>
        <taxon>Saccharomyces</taxon>
    </lineage>
</organism>
<gene>
    <name type="primary">SHY1</name>
    <name type="ordered locus">YGR112W</name>
    <name type="ORF">G6150</name>
</gene>
<reference key="1">
    <citation type="journal article" date="1996" name="Yeast">
        <title>The sequence of a 23.4 kb segment on the right arm of chromosome VII from Saccharomyces cerevisiae reveals CLB6, SPT6, RP28A and NUP57 genes, a Ty3 element and 11 new open reading frames.</title>
        <authorList>
            <person name="Hansen M."/>
            <person name="Albers M."/>
            <person name="Backes U."/>
            <person name="Coblenz A."/>
            <person name="Leuther H."/>
            <person name="Neu R."/>
            <person name="Schreer A."/>
            <person name="Schaefer B."/>
            <person name="Zimmermann M."/>
            <person name="Wolf K."/>
        </authorList>
    </citation>
    <scope>NUCLEOTIDE SEQUENCE [GENOMIC DNA]</scope>
</reference>
<reference key="2">
    <citation type="journal article" date="1997" name="Nature">
        <title>The nucleotide sequence of Saccharomyces cerevisiae chromosome VII.</title>
        <authorList>
            <person name="Tettelin H."/>
            <person name="Agostoni-Carbone M.L."/>
            <person name="Albermann K."/>
            <person name="Albers M."/>
            <person name="Arroyo J."/>
            <person name="Backes U."/>
            <person name="Barreiros T."/>
            <person name="Bertani I."/>
            <person name="Bjourson A.J."/>
            <person name="Brueckner M."/>
            <person name="Bruschi C.V."/>
            <person name="Carignani G."/>
            <person name="Castagnoli L."/>
            <person name="Cerdan E."/>
            <person name="Clemente M.L."/>
            <person name="Coblenz A."/>
            <person name="Coglievina M."/>
            <person name="Coissac E."/>
            <person name="Defoor E."/>
            <person name="Del Bino S."/>
            <person name="Delius H."/>
            <person name="Delneri D."/>
            <person name="de Wergifosse P."/>
            <person name="Dujon B."/>
            <person name="Durand P."/>
            <person name="Entian K.-D."/>
            <person name="Eraso P."/>
            <person name="Escribano V."/>
            <person name="Fabiani L."/>
            <person name="Fartmann B."/>
            <person name="Feroli F."/>
            <person name="Feuermann M."/>
            <person name="Frontali L."/>
            <person name="Garcia-Gonzalez M."/>
            <person name="Garcia-Saez M.I."/>
            <person name="Goffeau A."/>
            <person name="Guerreiro P."/>
            <person name="Hani J."/>
            <person name="Hansen M."/>
            <person name="Hebling U."/>
            <person name="Hernandez K."/>
            <person name="Heumann K."/>
            <person name="Hilger F."/>
            <person name="Hofmann B."/>
            <person name="Indge K.J."/>
            <person name="James C.M."/>
            <person name="Klima R."/>
            <person name="Koetter P."/>
            <person name="Kramer B."/>
            <person name="Kramer W."/>
            <person name="Lauquin G."/>
            <person name="Leuther H."/>
            <person name="Louis E.J."/>
            <person name="Maillier E."/>
            <person name="Marconi A."/>
            <person name="Martegani E."/>
            <person name="Mazon M.J."/>
            <person name="Mazzoni C."/>
            <person name="McReynolds A.D.K."/>
            <person name="Melchioretto P."/>
            <person name="Mewes H.-W."/>
            <person name="Minenkova O."/>
            <person name="Mueller-Auer S."/>
            <person name="Nawrocki A."/>
            <person name="Netter P."/>
            <person name="Neu R."/>
            <person name="Nombela C."/>
            <person name="Oliver S.G."/>
            <person name="Panzeri L."/>
            <person name="Paoluzi S."/>
            <person name="Plevani P."/>
            <person name="Portetelle D."/>
            <person name="Portillo F."/>
            <person name="Potier S."/>
            <person name="Purnelle B."/>
            <person name="Rieger M."/>
            <person name="Riles L."/>
            <person name="Rinaldi T."/>
            <person name="Robben J."/>
            <person name="Rodrigues-Pousada C."/>
            <person name="Rodriguez-Belmonte E."/>
            <person name="Rodriguez-Torres A.M."/>
            <person name="Rose M."/>
            <person name="Ruzzi M."/>
            <person name="Saliola M."/>
            <person name="Sanchez-Perez M."/>
            <person name="Schaefer B."/>
            <person name="Schaefer M."/>
            <person name="Scharfe M."/>
            <person name="Schmidheini T."/>
            <person name="Schreer A."/>
            <person name="Skala J."/>
            <person name="Souciet J.-L."/>
            <person name="Steensma H.Y."/>
            <person name="Talla E."/>
            <person name="Thierry A."/>
            <person name="Vandenbol M."/>
            <person name="van der Aart Q.J.M."/>
            <person name="Van Dyck L."/>
            <person name="Vanoni M."/>
            <person name="Verhasselt P."/>
            <person name="Voet M."/>
            <person name="Volckaert G."/>
            <person name="Wambutt R."/>
            <person name="Watson M.D."/>
            <person name="Weber N."/>
            <person name="Wedler E."/>
            <person name="Wedler H."/>
            <person name="Wipfli P."/>
            <person name="Wolf K."/>
            <person name="Wright L.F."/>
            <person name="Zaccaria P."/>
            <person name="Zimmermann M."/>
            <person name="Zollner A."/>
            <person name="Kleine K."/>
        </authorList>
    </citation>
    <scope>NUCLEOTIDE SEQUENCE [LARGE SCALE GENOMIC DNA]</scope>
    <source>
        <strain>ATCC 204508 / S288c</strain>
    </source>
</reference>
<reference key="3">
    <citation type="journal article" date="2014" name="G3 (Bethesda)">
        <title>The reference genome sequence of Saccharomyces cerevisiae: Then and now.</title>
        <authorList>
            <person name="Engel S.R."/>
            <person name="Dietrich F.S."/>
            <person name="Fisk D.G."/>
            <person name="Binkley G."/>
            <person name="Balakrishnan R."/>
            <person name="Costanzo M.C."/>
            <person name="Dwight S.S."/>
            <person name="Hitz B.C."/>
            <person name="Karra K."/>
            <person name="Nash R.S."/>
            <person name="Weng S."/>
            <person name="Wong E.D."/>
            <person name="Lloyd P."/>
            <person name="Skrzypek M.S."/>
            <person name="Miyasato S.R."/>
            <person name="Simison M."/>
            <person name="Cherry J.M."/>
        </authorList>
    </citation>
    <scope>GENOME REANNOTATION</scope>
    <source>
        <strain>ATCC 204508 / S288c</strain>
    </source>
</reference>
<reference key="4">
    <citation type="journal article" date="1997" name="J. Biol. Chem.">
        <title>SHY1, the yeast homolog of the mammalian SURF-1 gene, encodes a mitochondrial protein required for respiration.</title>
        <authorList>
            <person name="Mashkevich G."/>
            <person name="Repetto B."/>
            <person name="Glerum D.M."/>
            <person name="Jin C."/>
            <person name="Tzagoloff A."/>
        </authorList>
    </citation>
    <scope>CHARACTERIZATION</scope>
    <scope>SUBCELLULAR LOCATION</scope>
    <scope>TOPOLOGY</scope>
</reference>
<reference key="5">
    <citation type="journal article" date="2002" name="EMBO J.">
        <title>Shy1p is necessary for full expression of mitochondrial COX1 in the yeast model of Leigh's syndrome.</title>
        <authorList>
            <person name="Barrientos A."/>
            <person name="Korr D."/>
            <person name="Tzagoloff A."/>
        </authorList>
    </citation>
    <scope>FUNCTION</scope>
</reference>
<reference key="6">
    <citation type="journal article" date="2003" name="Nature">
        <title>Global analysis of protein localization in budding yeast.</title>
        <authorList>
            <person name="Huh W.-K."/>
            <person name="Falvo J.V."/>
            <person name="Gerke L.C."/>
            <person name="Carroll A.S."/>
            <person name="Howson R.W."/>
            <person name="Weissman J.S."/>
            <person name="O'Shea E.K."/>
        </authorList>
    </citation>
    <scope>SUBCELLULAR LOCATION [LARGE SCALE ANALYSIS]</scope>
</reference>
<reference key="7">
    <citation type="journal article" date="2003" name="Nature">
        <title>Global analysis of protein expression in yeast.</title>
        <authorList>
            <person name="Ghaemmaghami S."/>
            <person name="Huh W.-K."/>
            <person name="Bower K."/>
            <person name="Howson R.W."/>
            <person name="Belle A."/>
            <person name="Dephoure N."/>
            <person name="O'Shea E.K."/>
            <person name="Weissman J.S."/>
        </authorList>
    </citation>
    <scope>LEVEL OF PROTEIN EXPRESSION [LARGE SCALE ANALYSIS]</scope>
</reference>
<reference key="8">
    <citation type="journal article" date="2003" name="Proc. Natl. Acad. Sci. U.S.A.">
        <title>The proteome of Saccharomyces cerevisiae mitochondria.</title>
        <authorList>
            <person name="Sickmann A."/>
            <person name="Reinders J."/>
            <person name="Wagner Y."/>
            <person name="Joppich C."/>
            <person name="Zahedi R.P."/>
            <person name="Meyer H.E."/>
            <person name="Schoenfisch B."/>
            <person name="Perschil I."/>
            <person name="Chacinska A."/>
            <person name="Guiard B."/>
            <person name="Rehling P."/>
            <person name="Pfanner N."/>
            <person name="Meisinger C."/>
        </authorList>
    </citation>
    <scope>SUBCELLULAR LOCATION [LARGE SCALE ANALYSIS]</scope>
    <source>
        <strain>ATCC 76625 / YPH499</strain>
    </source>
</reference>
<reference key="9">
    <citation type="journal article" date="2007" name="EMBO J.">
        <title>Coa1 links the Mss51 post-translational function to Cox1 cofactor insertion in cytochrome c oxidase assembly.</title>
        <authorList>
            <person name="Pierrel F."/>
            <person name="Bestwick M.L."/>
            <person name="Cobine P.A."/>
            <person name="Khalimonchuk O."/>
            <person name="Cricco J.A."/>
            <person name="Winge D.R."/>
        </authorList>
    </citation>
    <scope>INTERACTION WITH COA1</scope>
</reference>
<reference key="10">
    <citation type="journal article" date="2007" name="EMBO J.">
        <title>Shy1 couples Cox1 translational regulation to cytochrome c oxidase assembly.</title>
        <authorList>
            <person name="Mick D.U."/>
            <person name="Wagner K."/>
            <person name="van der Laan M."/>
            <person name="Frazier A.E."/>
            <person name="Perschil I."/>
            <person name="Pawlas M."/>
            <person name="Meyer H.E."/>
            <person name="Warscheid B."/>
            <person name="Rehling P."/>
        </authorList>
    </citation>
    <scope>FUNCTION</scope>
    <scope>INTERACTION WITH COX14 AND MSS51</scope>
</reference>
<reference key="11">
    <citation type="journal article" date="2008" name="Mol. Cell. Biol.">
        <title>Coa2 is an assembly factor for yeast cytochrome C oxidase biogenesis that facilitates the maturation of cox1.</title>
        <authorList>
            <person name="Pierrel F."/>
            <person name="Khalimonchuk O."/>
            <person name="Cobine P.A."/>
            <person name="Bestwick M.L."/>
            <person name="Winge D.R."/>
        </authorList>
    </citation>
    <scope>FUNCTION</scope>
    <scope>INTERACTION WITH COA2</scope>
</reference>
<evidence type="ECO:0000255" key="1"/>
<evidence type="ECO:0000256" key="2">
    <source>
        <dbReference type="SAM" id="MobiDB-lite"/>
    </source>
</evidence>
<evidence type="ECO:0000269" key="3">
    <source>
    </source>
</evidence>
<evidence type="ECO:0000269" key="4">
    <source>
    </source>
</evidence>
<evidence type="ECO:0000269" key="5">
    <source>
    </source>
</evidence>
<evidence type="ECO:0000269" key="6">
    <source>
    </source>
</evidence>
<evidence type="ECO:0000269" key="7">
    <source>
    </source>
</evidence>
<evidence type="ECO:0000269" key="8">
    <source>
    </source>
</evidence>
<evidence type="ECO:0000269" key="9">
    <source>
    </source>
</evidence>
<evidence type="ECO:0000269" key="10">
    <source>
    </source>
</evidence>
<evidence type="ECO:0000305" key="11"/>
<accession>P53266</accession>
<accession>D6VUP5</accession>
<name>SHY1_YEAST</name>
<dbReference type="EMBL" id="Z72897">
    <property type="protein sequence ID" value="CAA97120.1"/>
    <property type="molecule type" value="Genomic_DNA"/>
</dbReference>
<dbReference type="EMBL" id="BK006941">
    <property type="protein sequence ID" value="DAA08206.1"/>
    <property type="molecule type" value="Genomic_DNA"/>
</dbReference>
<dbReference type="PIR" id="S64420">
    <property type="entry name" value="S64420"/>
</dbReference>
<dbReference type="RefSeq" id="NP_011627.1">
    <property type="nucleotide sequence ID" value="NM_001181241.1"/>
</dbReference>
<dbReference type="BioGRID" id="33359">
    <property type="interactions" value="155"/>
</dbReference>
<dbReference type="FunCoup" id="P53266">
    <property type="interactions" value="462"/>
</dbReference>
<dbReference type="IntAct" id="P53266">
    <property type="interactions" value="15"/>
</dbReference>
<dbReference type="MINT" id="P53266"/>
<dbReference type="STRING" id="4932.YGR112W"/>
<dbReference type="TCDB" id="3.D.4.8.1">
    <property type="family name" value="the proton-translocating cytochrome oxidase (cox) superfamily"/>
</dbReference>
<dbReference type="PaxDb" id="4932-YGR112W"/>
<dbReference type="PeptideAtlas" id="P53266"/>
<dbReference type="DNASU" id="853009"/>
<dbReference type="EnsemblFungi" id="YGR112W_mRNA">
    <property type="protein sequence ID" value="YGR112W"/>
    <property type="gene ID" value="YGR112W"/>
</dbReference>
<dbReference type="GeneID" id="853009"/>
<dbReference type="KEGG" id="sce:YGR112W"/>
<dbReference type="AGR" id="SGD:S000003344"/>
<dbReference type="SGD" id="S000003344">
    <property type="gene designation" value="SHY1"/>
</dbReference>
<dbReference type="VEuPathDB" id="FungiDB:YGR112W"/>
<dbReference type="eggNOG" id="KOG1563">
    <property type="taxonomic scope" value="Eukaryota"/>
</dbReference>
<dbReference type="GeneTree" id="ENSGT00530000064194"/>
<dbReference type="HOGENOM" id="CLU_047737_4_0_1"/>
<dbReference type="InParanoid" id="P53266"/>
<dbReference type="OMA" id="YLGTWQL"/>
<dbReference type="OrthoDB" id="10040024at2759"/>
<dbReference type="BioCyc" id="YEAST:G3O-30821-MONOMER"/>
<dbReference type="BioGRID-ORCS" id="853009">
    <property type="hits" value="3 hits in 10 CRISPR screens"/>
</dbReference>
<dbReference type="PRO" id="PR:P53266"/>
<dbReference type="Proteomes" id="UP000002311">
    <property type="component" value="Chromosome VII"/>
</dbReference>
<dbReference type="RNAct" id="P53266">
    <property type="molecule type" value="protein"/>
</dbReference>
<dbReference type="GO" id="GO:0016020">
    <property type="term" value="C:membrane"/>
    <property type="evidence" value="ECO:0000314"/>
    <property type="project" value="SGD"/>
</dbReference>
<dbReference type="GO" id="GO:0005743">
    <property type="term" value="C:mitochondrial inner membrane"/>
    <property type="evidence" value="ECO:0000314"/>
    <property type="project" value="UniProtKB"/>
</dbReference>
<dbReference type="GO" id="GO:0005739">
    <property type="term" value="C:mitochondrion"/>
    <property type="evidence" value="ECO:0007005"/>
    <property type="project" value="SGD"/>
</dbReference>
<dbReference type="GO" id="GO:0005777">
    <property type="term" value="C:peroxisome"/>
    <property type="evidence" value="ECO:0007005"/>
    <property type="project" value="SGD"/>
</dbReference>
<dbReference type="GO" id="GO:0051082">
    <property type="term" value="F:unfolded protein binding"/>
    <property type="evidence" value="ECO:0000315"/>
    <property type="project" value="SGD"/>
</dbReference>
<dbReference type="GO" id="GO:0033617">
    <property type="term" value="P:mitochondrial cytochrome c oxidase assembly"/>
    <property type="evidence" value="ECO:0000315"/>
    <property type="project" value="SGD"/>
</dbReference>
<dbReference type="CDD" id="cd06662">
    <property type="entry name" value="SURF1"/>
    <property type="match status" value="1"/>
</dbReference>
<dbReference type="InterPro" id="IPR002994">
    <property type="entry name" value="Surf1/Shy1"/>
</dbReference>
<dbReference type="InterPro" id="IPR045214">
    <property type="entry name" value="Surf1/Surf4"/>
</dbReference>
<dbReference type="PANTHER" id="PTHR23427">
    <property type="entry name" value="SURFEIT LOCUS PROTEIN"/>
    <property type="match status" value="1"/>
</dbReference>
<dbReference type="PANTHER" id="PTHR23427:SF2">
    <property type="entry name" value="SURFEIT LOCUS PROTEIN 1"/>
    <property type="match status" value="1"/>
</dbReference>
<dbReference type="Pfam" id="PF02104">
    <property type="entry name" value="SURF1"/>
    <property type="match status" value="1"/>
</dbReference>
<dbReference type="PROSITE" id="PS50895">
    <property type="entry name" value="SURF1"/>
    <property type="match status" value="1"/>
</dbReference>
<protein>
    <recommendedName>
        <fullName>Cytochrome oxidase assembly protein SHY1</fullName>
    </recommendedName>
    <alternativeName>
        <fullName>SURF1 homolog of Yeast</fullName>
    </alternativeName>
    <alternativeName>
        <fullName>SURF1-like protein</fullName>
    </alternativeName>
</protein>
<comment type="function">
    <text evidence="3 7 9">Required for efficient assembly of cytochrome c oxidase in the mitochondrial inner membrane. Involved in a step that couples MSS51-COX14-dependent regulation of COX1 translation to early steps of cytochrome c oxidase assembly.</text>
</comment>
<comment type="subunit">
    <text evidence="7 8 9">Interacts with COA1, COX14 and MSS51.</text>
</comment>
<comment type="interaction">
    <interactant intactId="EBI-17111">
        <id>P53266</id>
    </interactant>
    <interactant intactId="EBI-25287">
        <id>P40452</id>
        <label>COA1</label>
    </interactant>
    <organismsDiffer>false</organismsDiffer>
    <experiments>5</experiments>
</comment>
<comment type="subcellular location">
    <subcellularLocation>
        <location evidence="4 6 10">Mitochondrion inner membrane</location>
        <topology evidence="4 6 10">Multi-pass membrane protein</topology>
    </subcellularLocation>
</comment>
<comment type="miscellaneous">
    <text evidence="5">Present with 623 molecules/cell in log phase SD medium.</text>
</comment>
<comment type="similarity">
    <text evidence="11">Belongs to the SURF1 family.</text>
</comment>
<feature type="chain" id="PRO_0000215659" description="Cytochrome oxidase assembly protein SHY1">
    <location>
        <begin position="1"/>
        <end position="389"/>
    </location>
</feature>
<feature type="topological domain" description="Mitochondrial matrix" evidence="1">
    <location>
        <begin position="1"/>
        <end position="71"/>
    </location>
</feature>
<feature type="transmembrane region" description="Helical" evidence="1">
    <location>
        <begin position="72"/>
        <end position="92"/>
    </location>
</feature>
<feature type="topological domain" description="Mitochondrial intermembrane" evidence="1">
    <location>
        <begin position="93"/>
        <end position="341"/>
    </location>
</feature>
<feature type="transmembrane region" description="Helical" evidence="1">
    <location>
        <begin position="342"/>
        <end position="362"/>
    </location>
</feature>
<feature type="topological domain" description="Mitochondrial matrix" evidence="1">
    <location>
        <begin position="363"/>
        <end position="389"/>
    </location>
</feature>
<feature type="region of interest" description="Disordered" evidence="2">
    <location>
        <begin position="292"/>
        <end position="311"/>
    </location>
</feature>
<proteinExistence type="evidence at protein level"/>
<keyword id="KW-0472">Membrane</keyword>
<keyword id="KW-0496">Mitochondrion</keyword>
<keyword id="KW-0999">Mitochondrion inner membrane</keyword>
<keyword id="KW-1185">Reference proteome</keyword>
<keyword id="KW-0812">Transmembrane</keyword>
<keyword id="KW-1133">Transmembrane helix</keyword>